<reference key="1">
    <citation type="journal article" date="2006" name="Proc. Natl. Acad. Sci. U.S.A.">
        <title>The partitioned Rhizobium etli genome: genetic and metabolic redundancy in seven interacting replicons.</title>
        <authorList>
            <person name="Gonzalez V."/>
            <person name="Santamaria R.I."/>
            <person name="Bustos P."/>
            <person name="Hernandez-Gonzalez I."/>
            <person name="Medrano-Soto A."/>
            <person name="Moreno-Hagelsieb G."/>
            <person name="Janga S.C."/>
            <person name="Ramirez M.A."/>
            <person name="Jimenez-Jacinto V."/>
            <person name="Collado-Vides J."/>
            <person name="Davila G."/>
        </authorList>
    </citation>
    <scope>NUCLEOTIDE SEQUENCE [LARGE SCALE GENOMIC DNA]</scope>
    <source>
        <strain>ATCC 51251 / DSM 11541 / JCM 21823 / NBRC 15573 / CFN 42</strain>
    </source>
</reference>
<name>Y2903_RHIEC</name>
<protein>
    <recommendedName>
        <fullName evidence="1">UPF0303 protein RHE_CH02903</fullName>
    </recommendedName>
</protein>
<comment type="similarity">
    <text evidence="1">Belongs to the UPF0303 family.</text>
</comment>
<gene>
    <name type="ordered locus">RHE_CH02903</name>
</gene>
<evidence type="ECO:0000255" key="1">
    <source>
        <dbReference type="HAMAP-Rule" id="MF_00761"/>
    </source>
</evidence>
<dbReference type="EMBL" id="CP000133">
    <property type="protein sequence ID" value="ABC91671.1"/>
    <property type="molecule type" value="Genomic_DNA"/>
</dbReference>
<dbReference type="RefSeq" id="WP_011426147.1">
    <property type="nucleotide sequence ID" value="NC_007761.1"/>
</dbReference>
<dbReference type="SMR" id="Q2K665"/>
<dbReference type="KEGG" id="ret:RHE_CH02903"/>
<dbReference type="eggNOG" id="COG4702">
    <property type="taxonomic scope" value="Bacteria"/>
</dbReference>
<dbReference type="HOGENOM" id="CLU_101036_2_1_5"/>
<dbReference type="OrthoDB" id="9815315at2"/>
<dbReference type="Proteomes" id="UP000001936">
    <property type="component" value="Chromosome"/>
</dbReference>
<dbReference type="Gene3D" id="3.30.450.150">
    <property type="entry name" value="Haem-degrading domain"/>
    <property type="match status" value="1"/>
</dbReference>
<dbReference type="HAMAP" id="MF_00761">
    <property type="entry name" value="UPF0303"/>
    <property type="match status" value="1"/>
</dbReference>
<dbReference type="InterPro" id="IPR005624">
    <property type="entry name" value="PduO/GlcC-like"/>
</dbReference>
<dbReference type="InterPro" id="IPR038084">
    <property type="entry name" value="PduO/GlcC-like_sf"/>
</dbReference>
<dbReference type="InterPro" id="IPR010371">
    <property type="entry name" value="YBR137W-like"/>
</dbReference>
<dbReference type="NCBIfam" id="NF002696">
    <property type="entry name" value="PRK02487.1-5"/>
    <property type="match status" value="1"/>
</dbReference>
<dbReference type="PANTHER" id="PTHR28255">
    <property type="match status" value="1"/>
</dbReference>
<dbReference type="PANTHER" id="PTHR28255:SF1">
    <property type="entry name" value="UPF0303 PROTEIN YBR137W"/>
    <property type="match status" value="1"/>
</dbReference>
<dbReference type="Pfam" id="PF03928">
    <property type="entry name" value="HbpS-like"/>
    <property type="match status" value="1"/>
</dbReference>
<dbReference type="PIRSF" id="PIRSF008757">
    <property type="entry name" value="UCP008757"/>
    <property type="match status" value="1"/>
</dbReference>
<dbReference type="SUPFAM" id="SSF143744">
    <property type="entry name" value="GlcG-like"/>
    <property type="match status" value="1"/>
</dbReference>
<accession>Q2K665</accession>
<sequence>MTIDNDLSRIAEQEKALSFDAFDLTTAWQLGKLLQELASERGLGIAIDVTLHSMPVFYAALPGVTPDNVNWVRRKRNMVLRYFRSSYASGLKLSKDGKTVEDNGLDGADYAPHGGSFPINVKGTGCIGAVTVSGLPQRDDHNLVVEALALMLAKDLDTLRLSPL</sequence>
<proteinExistence type="inferred from homology"/>
<feature type="chain" id="PRO_1000046751" description="UPF0303 protein RHE_CH02903">
    <location>
        <begin position="1"/>
        <end position="164"/>
    </location>
</feature>
<keyword id="KW-1185">Reference proteome</keyword>
<organism>
    <name type="scientific">Rhizobium etli (strain ATCC 51251 / DSM 11541 / JCM 21823 / NBRC 15573 / CFN 42)</name>
    <dbReference type="NCBI Taxonomy" id="347834"/>
    <lineage>
        <taxon>Bacteria</taxon>
        <taxon>Pseudomonadati</taxon>
        <taxon>Pseudomonadota</taxon>
        <taxon>Alphaproteobacteria</taxon>
        <taxon>Hyphomicrobiales</taxon>
        <taxon>Rhizobiaceae</taxon>
        <taxon>Rhizobium/Agrobacterium group</taxon>
        <taxon>Rhizobium</taxon>
    </lineage>
</organism>